<accession>P44279</accession>
<keyword id="KW-1185">Reference proteome</keyword>
<keyword id="KW-0732">Signal</keyword>
<evidence type="ECO:0000255" key="1"/>
<name>Y1631_HAEIN</name>
<protein>
    <recommendedName>
        <fullName>Uncharacterized protein HI_1631</fullName>
    </recommendedName>
</protein>
<proteinExistence type="inferred from homology"/>
<gene>
    <name type="ordered locus">HI_1631</name>
</gene>
<feature type="signal peptide" evidence="1">
    <location>
        <begin position="1"/>
        <end position="28"/>
    </location>
</feature>
<feature type="chain" id="PRO_0000013977" description="Uncharacterized protein HI_1631">
    <location>
        <begin position="29"/>
        <end position="190"/>
    </location>
</feature>
<sequence>MEFSLQYITIFIFVILFLIGLFSSKSRSTRRNEKKSRLYLSTENKINIVNKNDHLDVVILSKYKRKALMNKSEYQLFLRLEKLLSKGYQEFRLFTQVSMGEFLESIDKEAHFAINSKRVDFLIVDKNGYAVIVIEYQGQGHYQDNAAKRDAVKREACRKAGVIFLEFQPNYGKAELEFVGENLKRYLIKN</sequence>
<organism>
    <name type="scientific">Haemophilus influenzae (strain ATCC 51907 / DSM 11121 / KW20 / Rd)</name>
    <dbReference type="NCBI Taxonomy" id="71421"/>
    <lineage>
        <taxon>Bacteria</taxon>
        <taxon>Pseudomonadati</taxon>
        <taxon>Pseudomonadota</taxon>
        <taxon>Gammaproteobacteria</taxon>
        <taxon>Pasteurellales</taxon>
        <taxon>Pasteurellaceae</taxon>
        <taxon>Haemophilus</taxon>
    </lineage>
</organism>
<dbReference type="EMBL" id="L42023">
    <property type="protein sequence ID" value="AAC23283.1"/>
    <property type="molecule type" value="Genomic_DNA"/>
</dbReference>
<dbReference type="PIR" id="A64039">
    <property type="entry name" value="A64039"/>
</dbReference>
<dbReference type="RefSeq" id="NP_439773.1">
    <property type="nucleotide sequence ID" value="NC_000907.1"/>
</dbReference>
<dbReference type="STRING" id="71421.HI_1631"/>
<dbReference type="EnsemblBacteria" id="AAC23283">
    <property type="protein sequence ID" value="AAC23283"/>
    <property type="gene ID" value="HI_1631"/>
</dbReference>
<dbReference type="KEGG" id="hin:HI_1631"/>
<dbReference type="PATRIC" id="fig|71421.8.peg.1706"/>
<dbReference type="eggNOG" id="ENOG5032UT1">
    <property type="taxonomic scope" value="Bacteria"/>
</dbReference>
<dbReference type="HOGENOM" id="CLU_114828_0_0_6"/>
<dbReference type="OrthoDB" id="5679025at2"/>
<dbReference type="PhylomeDB" id="P44279"/>
<dbReference type="BioCyc" id="HINF71421:G1GJ1-1644-MONOMER"/>
<dbReference type="Proteomes" id="UP000000579">
    <property type="component" value="Chromosome"/>
</dbReference>
<dbReference type="Gene3D" id="3.40.960.10">
    <property type="entry name" value="VSR Endonuclease"/>
    <property type="match status" value="1"/>
</dbReference>
<dbReference type="InterPro" id="IPR024402">
    <property type="entry name" value="DUF2726"/>
</dbReference>
<dbReference type="Pfam" id="PF10881">
    <property type="entry name" value="DUF2726"/>
    <property type="match status" value="1"/>
</dbReference>
<reference key="1">
    <citation type="journal article" date="1995" name="Science">
        <title>Whole-genome random sequencing and assembly of Haemophilus influenzae Rd.</title>
        <authorList>
            <person name="Fleischmann R.D."/>
            <person name="Adams M.D."/>
            <person name="White O."/>
            <person name="Clayton R.A."/>
            <person name="Kirkness E.F."/>
            <person name="Kerlavage A.R."/>
            <person name="Bult C.J."/>
            <person name="Tomb J.-F."/>
            <person name="Dougherty B.A."/>
            <person name="Merrick J.M."/>
            <person name="McKenney K."/>
            <person name="Sutton G.G."/>
            <person name="FitzHugh W."/>
            <person name="Fields C.A."/>
            <person name="Gocayne J.D."/>
            <person name="Scott J.D."/>
            <person name="Shirley R."/>
            <person name="Liu L.-I."/>
            <person name="Glodek A."/>
            <person name="Kelley J.M."/>
            <person name="Weidman J.F."/>
            <person name="Phillips C.A."/>
            <person name="Spriggs T."/>
            <person name="Hedblom E."/>
            <person name="Cotton M.D."/>
            <person name="Utterback T.R."/>
            <person name="Hanna M.C."/>
            <person name="Nguyen D.T."/>
            <person name="Saudek D.M."/>
            <person name="Brandon R.C."/>
            <person name="Fine L.D."/>
            <person name="Fritchman J.L."/>
            <person name="Fuhrmann J.L."/>
            <person name="Geoghagen N.S.M."/>
            <person name="Gnehm C.L."/>
            <person name="McDonald L.A."/>
            <person name="Small K.V."/>
            <person name="Fraser C.M."/>
            <person name="Smith H.O."/>
            <person name="Venter J.C."/>
        </authorList>
    </citation>
    <scope>NUCLEOTIDE SEQUENCE [LARGE SCALE GENOMIC DNA]</scope>
    <source>
        <strain>ATCC 51907 / DSM 11121 / KW20 / Rd</strain>
    </source>
</reference>